<feature type="chain" id="PRO_0000065187" description="Uncharacterized protein C18B2.2">
    <location>
        <begin position="1"/>
        <end position="356"/>
    </location>
</feature>
<feature type="transmembrane region" description="Helical" evidence="1">
    <location>
        <begin position="8"/>
        <end position="28"/>
    </location>
</feature>
<protein>
    <recommendedName>
        <fullName>Uncharacterized protein C18B2.2</fullName>
    </recommendedName>
</protein>
<keyword id="KW-0472">Membrane</keyword>
<keyword id="KW-1185">Reference proteome</keyword>
<keyword id="KW-0812">Transmembrane</keyword>
<keyword id="KW-1133">Transmembrane helix</keyword>
<evidence type="ECO:0000255" key="1"/>
<evidence type="ECO:0000305" key="2"/>
<comment type="subcellular location">
    <subcellularLocation>
        <location evidence="2">Membrane</location>
        <topology evidence="2">Single-pass membrane protein</topology>
    </subcellularLocation>
</comment>
<comment type="similarity">
    <text evidence="2">To C.elegans C41C4.1 and C18B2.1.</text>
</comment>
<sequence length="356" mass="42235">MTNIVPRILGFVLFVLGAAIFLTEVMHSYHRFVKQSEEYSISNSNTDDAPTKKKQMKAFFSLYHNMDELKAQNSDVVQPRVLKGTAREFCNNTDHCIRPFLNHETRYRVAPDYKMAHCVVHKSMSTVITGIWCYLFNRNRFVRVDKQMNMSEWDKESLCRGDNTFRHLKSLQKKYNASEMTGWSLSMITRDPIDRFISGYVDRCIRVAEGPSPCNGCDKNMTCFILSEYERFKKQAHKGVLTNTFEDRHFYPQNWRCDIKTMRNKYEFIRYSSDASKELMEDLFKIARRQGIPEKELEYIENELTKNRKTSHTTAYSPAREFFQRRLRESPLLMEYVVRMFYHDFVILNYPLPEGF</sequence>
<gene>
    <name type="ORF">C18B2.2</name>
</gene>
<proteinExistence type="predicted"/>
<reference key="1">
    <citation type="journal article" date="1998" name="Science">
        <title>Genome sequence of the nematode C. elegans: a platform for investigating biology.</title>
        <authorList>
            <consortium name="The C. elegans sequencing consortium"/>
        </authorList>
    </citation>
    <scope>NUCLEOTIDE SEQUENCE [LARGE SCALE GENOMIC DNA]</scope>
    <source>
        <strain>Bristol N2</strain>
    </source>
</reference>
<dbReference type="EMBL" id="FO080605">
    <property type="protein sequence ID" value="CCD65073.1"/>
    <property type="molecule type" value="Genomic_DNA"/>
</dbReference>
<dbReference type="PIR" id="T15553">
    <property type="entry name" value="T15553"/>
</dbReference>
<dbReference type="RefSeq" id="NP_001379697.1">
    <property type="nucleotide sequence ID" value="NM_001392747.1"/>
</dbReference>
<dbReference type="RefSeq" id="NP_508623.1">
    <property type="nucleotide sequence ID" value="NM_076222.3"/>
</dbReference>
<dbReference type="BioGRID" id="47612">
    <property type="interactions" value="1"/>
</dbReference>
<dbReference type="FunCoup" id="Q18078">
    <property type="interactions" value="19"/>
</dbReference>
<dbReference type="IntAct" id="Q18078">
    <property type="interactions" value="1"/>
</dbReference>
<dbReference type="PaxDb" id="6239-C18B2.2"/>
<dbReference type="EnsemblMetazoa" id="C18B2.2.1">
    <property type="protein sequence ID" value="C18B2.2.1"/>
    <property type="gene ID" value="WBGene00015953"/>
</dbReference>
<dbReference type="GeneID" id="182766"/>
<dbReference type="UCSC" id="C18B2.2">
    <property type="organism name" value="c. elegans"/>
</dbReference>
<dbReference type="AGR" id="WB:WBGene00015953"/>
<dbReference type="WormBase" id="C18B2.2">
    <property type="protein sequence ID" value="CE29179"/>
    <property type="gene ID" value="WBGene00015953"/>
</dbReference>
<dbReference type="eggNOG" id="KOG4651">
    <property type="taxonomic scope" value="Eukaryota"/>
</dbReference>
<dbReference type="GeneTree" id="ENSGT00970000195842"/>
<dbReference type="HOGENOM" id="CLU_069458_1_0_1"/>
<dbReference type="InParanoid" id="Q18078"/>
<dbReference type="OMA" id="MTCFILS"/>
<dbReference type="OrthoDB" id="408912at2759"/>
<dbReference type="PhylomeDB" id="Q18078"/>
<dbReference type="PRO" id="PR:Q18078"/>
<dbReference type="Proteomes" id="UP000001940">
    <property type="component" value="Chromosome X"/>
</dbReference>
<dbReference type="Bgee" id="WBGene00015953">
    <property type="expression patterns" value="Expressed in larva"/>
</dbReference>
<dbReference type="GO" id="GO:0016020">
    <property type="term" value="C:membrane"/>
    <property type="evidence" value="ECO:0007669"/>
    <property type="project" value="UniProtKB-SubCell"/>
</dbReference>
<dbReference type="GO" id="GO:0047756">
    <property type="term" value="F:chondroitin 4-sulfotransferase activity"/>
    <property type="evidence" value="ECO:0007669"/>
    <property type="project" value="InterPro"/>
</dbReference>
<dbReference type="GO" id="GO:1902884">
    <property type="term" value="P:positive regulation of response to oxidative stress"/>
    <property type="evidence" value="ECO:0007669"/>
    <property type="project" value="InterPro"/>
</dbReference>
<dbReference type="InterPro" id="IPR007669">
    <property type="entry name" value="Chst-1-like"/>
</dbReference>
<dbReference type="InterPro" id="IPR005331">
    <property type="entry name" value="Sulfotransferase"/>
</dbReference>
<dbReference type="PANTHER" id="PTHR22900:SF5">
    <property type="entry name" value="PROTEIN CBG14245"/>
    <property type="match status" value="1"/>
</dbReference>
<dbReference type="PANTHER" id="PTHR22900">
    <property type="entry name" value="PROTEIN CBG14245-RELATED"/>
    <property type="match status" value="1"/>
</dbReference>
<dbReference type="Pfam" id="PF03567">
    <property type="entry name" value="Sulfotransfer_2"/>
    <property type="match status" value="1"/>
</dbReference>
<name>YXT2_CAEEL</name>
<organism>
    <name type="scientific">Caenorhabditis elegans</name>
    <dbReference type="NCBI Taxonomy" id="6239"/>
    <lineage>
        <taxon>Eukaryota</taxon>
        <taxon>Metazoa</taxon>
        <taxon>Ecdysozoa</taxon>
        <taxon>Nematoda</taxon>
        <taxon>Chromadorea</taxon>
        <taxon>Rhabditida</taxon>
        <taxon>Rhabditina</taxon>
        <taxon>Rhabditomorpha</taxon>
        <taxon>Rhabditoidea</taxon>
        <taxon>Rhabditidae</taxon>
        <taxon>Peloderinae</taxon>
        <taxon>Caenorhabditis</taxon>
    </lineage>
</organism>
<accession>Q18078</accession>